<sequence>MSVAFAAPRQRGKGEITPAAIQKMLDDNNHLIQCIMDSQNKGKTSECSQYQQMLHTNLVYLATIADSNQNMQSLLPAPPTQNMPMGPGGMNQSGPPPPPRSHNMPSDGMVGGGPPAPHMQNQMNGQMPGPNHMPMQGPGPNQLNMTNSSMNMPSSSHGSMGGYNHSVPSSQSMPVQNQMTMSQGQPMGNYGPRPNMSMQPNQGPMMHQQPPSQQYNMPQGGGQHYQGQQPPMGMMGQVNQGNHMMGQRQIPPYRPPQQGPPQQYSGQEDYYGDQYSHGGQGPPEGMNQQYYPDGHNDYGYQQPSYPEQGYDRPYEDSSQHYYEGGNSQYGQQQDAYQGPPPQQGYPPQQQQYPGQQGYPGQQQGYGPSQGGPGPQYPNYPQGQGQQYGGYRPTQPGPPQPPQQRPYGYDQGQYGNYQQ</sequence>
<keyword id="KW-0002">3D-structure</keyword>
<keyword id="KW-0007">Acetylation</keyword>
<keyword id="KW-0010">Activator</keyword>
<keyword id="KW-0025">Alternative splicing</keyword>
<keyword id="KW-0160">Chromosomal rearrangement</keyword>
<keyword id="KW-0539">Nucleus</keyword>
<keyword id="KW-1267">Proteomics identification</keyword>
<keyword id="KW-0656">Proto-oncogene</keyword>
<keyword id="KW-1185">Reference proteome</keyword>
<keyword id="KW-0677">Repeat</keyword>
<keyword id="KW-0804">Transcription</keyword>
<keyword id="KW-0805">Transcription regulation</keyword>
<name>SSXT_HUMAN</name>
<reference key="1">
    <citation type="journal article" date="1994" name="Nat. Genet.">
        <title>Identification of novel genes, SYT and SSX, involved in the t(X;18)(p11.2;q11.2) translocation found in human synovial sarcoma.</title>
        <authorList>
            <person name="Clark J."/>
            <person name="Rocques P.J."/>
            <person name="Crew A.J."/>
            <person name="Gill S."/>
            <person name="Shipley J."/>
            <person name="Chan A.M.-L."/>
            <person name="Gusterson B.A."/>
            <person name="Cooper C.S."/>
        </authorList>
    </citation>
    <scope>NUCLEOTIDE SEQUENCE [MRNA] (ISOFORM 2)</scope>
    <scope>SSXT-SSX2 FUSION PROTEIN</scope>
    <source>
        <tissue>Synovial sarcoma</tissue>
    </source>
</reference>
<reference key="2">
    <citation type="journal article" date="2001" name="Gene">
        <title>Cloning and characterization of spliced fusion transcript variants of synovial sarcoma: SYT/SSX4, SYT/SSX4v, and SYT/SSX2v. Possible regulatory role of the fusion gene product in wild type SYT expression.</title>
        <authorList>
            <person name="Brodin B."/>
            <person name="Haslam K."/>
            <person name="Yang K."/>
            <person name="Bartolazzi A."/>
            <person name="Xie Y."/>
            <person name="Starborg M."/>
            <person name="Lundeberg J."/>
            <person name="Larsson O."/>
        </authorList>
    </citation>
    <scope>NUCLEOTIDE SEQUENCE [MRNA] (ISOFORM 1)</scope>
</reference>
<reference key="3">
    <citation type="submission" date="2007-02" db="EMBL/GenBank/DDBJ databases">
        <authorList>
            <consortium name="NHLBI resequencing and genotyping service (RS&amp;G)"/>
        </authorList>
    </citation>
    <scope>NUCLEOTIDE SEQUENCE [GENOMIC DNA]</scope>
</reference>
<reference key="4">
    <citation type="submission" date="2005-07" db="EMBL/GenBank/DDBJ databases">
        <authorList>
            <person name="Mural R.J."/>
            <person name="Istrail S."/>
            <person name="Sutton G.G."/>
            <person name="Florea L."/>
            <person name="Halpern A.L."/>
            <person name="Mobarry C.M."/>
            <person name="Lippert R."/>
            <person name="Walenz B."/>
            <person name="Shatkay H."/>
            <person name="Dew I."/>
            <person name="Miller J.R."/>
            <person name="Flanigan M.J."/>
            <person name="Edwards N.J."/>
            <person name="Bolanos R."/>
            <person name="Fasulo D."/>
            <person name="Halldorsson B.V."/>
            <person name="Hannenhalli S."/>
            <person name="Turner R."/>
            <person name="Yooseph S."/>
            <person name="Lu F."/>
            <person name="Nusskern D.R."/>
            <person name="Shue B.C."/>
            <person name="Zheng X.H."/>
            <person name="Zhong F."/>
            <person name="Delcher A.L."/>
            <person name="Huson D.H."/>
            <person name="Kravitz S.A."/>
            <person name="Mouchard L."/>
            <person name="Reinert K."/>
            <person name="Remington K.A."/>
            <person name="Clark A.G."/>
            <person name="Waterman M.S."/>
            <person name="Eichler E.E."/>
            <person name="Adams M.D."/>
            <person name="Hunkapiller M.W."/>
            <person name="Myers E.W."/>
            <person name="Venter J.C."/>
        </authorList>
    </citation>
    <scope>NUCLEOTIDE SEQUENCE [LARGE SCALE GENOMIC DNA]</scope>
</reference>
<reference key="5">
    <citation type="journal article" date="2004" name="Genome Res.">
        <title>The status, quality, and expansion of the NIH full-length cDNA project: the Mammalian Gene Collection (MGC).</title>
        <authorList>
            <consortium name="The MGC Project Team"/>
        </authorList>
    </citation>
    <scope>NUCLEOTIDE SEQUENCE [LARGE SCALE MRNA] (ISOFORM 1)</scope>
</reference>
<reference key="6">
    <citation type="journal article" date="1995" name="Am. J. Pathol.">
        <title>Molecular diagnosis of synovial sarcoma and characterization of a variant SYT-SSX2 fusion transcript.</title>
        <authorList>
            <person name="Fligman I."/>
            <person name="Lonardo F."/>
            <person name="Jhanwar S.C."/>
            <person name="Gerald W.L."/>
            <person name="Woodruff J."/>
            <person name="Ladanyi M."/>
        </authorList>
    </citation>
    <scope>NUCLEOTIDE SEQUENCE [MRNA] OF 405-410 (SSXT-SSX2 FUSION PROTEIN)</scope>
    <scope>CHROMOSOMAL TRANSLOCATION WITH SSX2</scope>
</reference>
<reference key="7">
    <citation type="journal article" date="1995" name="EMBO J.">
        <title>Fusion of SYT to two genes, SSX1 and SSX2, encoding proteins with homology to the Kruppel-associated box in human synovial sarcoma.</title>
        <authorList>
            <person name="Crew A.J."/>
            <person name="Clark J."/>
            <person name="Fisher C."/>
            <person name="Gill S."/>
            <person name="Grimer R."/>
            <person name="Chand A."/>
            <person name="Shipley J."/>
            <person name="Gusterson B.A."/>
            <person name="Cooper C.S."/>
        </authorList>
    </citation>
    <scope>CHROMOSOMAL TRANSLOCATION WITH SSX1</scope>
    <scope>CHROMOSOMAL TRANSLOCATION WITH SSX2</scope>
</reference>
<reference key="8">
    <citation type="journal article" date="2001" name="Oncogene">
        <title>The synovial sarcoma associated protein SYT interacts with the acute leukemia associated protein AF10.</title>
        <authorList>
            <person name="de Bruijn D.R."/>
            <person name="dos Santos N.R."/>
            <person name="Thijssen J."/>
            <person name="Balemans M."/>
            <person name="Debernardi S."/>
            <person name="Linder B."/>
            <person name="Young B.D."/>
            <person name="Geurts van Kessel A."/>
        </authorList>
    </citation>
    <scope>INTERACTION WITH MLLT10</scope>
</reference>
<reference key="9">
    <citation type="journal article" date="2005" name="Endocrinology">
        <title>Synovial sarcoma translocation (SYT) encodes a nuclear receptor coactivator.</title>
        <authorList>
            <person name="Iwasaki T."/>
            <person name="Koibuchi N."/>
            <person name="Chin W.W."/>
        </authorList>
    </citation>
    <scope>FUNCTION</scope>
    <scope>ALTERNATIVE SPLICING</scope>
    <scope>INTERACTION WITH RBM14</scope>
</reference>
<reference key="10">
    <citation type="journal article" date="2012" name="Proc. Natl. Acad. Sci. U.S.A.">
        <title>N-terminal acetylome analyses and functional insights of the N-terminal acetyltransferase NatB.</title>
        <authorList>
            <person name="Van Damme P."/>
            <person name="Lasa M."/>
            <person name="Polevoda B."/>
            <person name="Gazquez C."/>
            <person name="Elosegui-Artola A."/>
            <person name="Kim D.S."/>
            <person name="De Juan-Pardo E."/>
            <person name="Demeyer K."/>
            <person name="Hole K."/>
            <person name="Larrea E."/>
            <person name="Timmerman E."/>
            <person name="Prieto J."/>
            <person name="Arnesen T."/>
            <person name="Sherman F."/>
            <person name="Gevaert K."/>
            <person name="Aldabe R."/>
        </authorList>
    </citation>
    <scope>ACETYLATION [LARGE SCALE ANALYSIS] AT SER-2</scope>
    <scope>CLEAVAGE OF INITIATOR METHIONINE [LARGE SCALE ANALYSIS]</scope>
    <scope>IDENTIFICATION BY MASS SPECTROMETRY [LARGE SCALE ANALYSIS]</scope>
</reference>
<reference key="11">
    <citation type="journal article" date="2018" name="J. Biol. Chem.">
        <title>Glioma tumor suppressor candidate region gene 1 (GLTSCR1) and its paralog GLTSCR1-like form SWI/SNF chromatin remodeling subcomplexes.</title>
        <authorList>
            <person name="Alpsoy A."/>
            <person name="Dykhuizen E.C."/>
        </authorList>
    </citation>
    <scope>FUNCTION</scope>
    <scope>IDENTIFICATION IN THE GBAF COMPLEX</scope>
</reference>
<proteinExistence type="evidence at protein level"/>
<dbReference type="EMBL" id="X79201">
    <property type="protein sequence ID" value="CAA55792.1"/>
    <property type="status" value="ALT_INIT"/>
    <property type="molecule type" value="mRNA"/>
</dbReference>
<dbReference type="EMBL" id="X79200">
    <property type="status" value="NOT_ANNOTATED_CDS"/>
    <property type="molecule type" value="mRNA"/>
</dbReference>
<dbReference type="EMBL" id="AF343880">
    <property type="protein sequence ID" value="AAK21314.1"/>
    <property type="status" value="ALT_INIT"/>
    <property type="molecule type" value="mRNA"/>
</dbReference>
<dbReference type="EMBL" id="EF445031">
    <property type="protein sequence ID" value="ACA06073.1"/>
    <property type="molecule type" value="Genomic_DNA"/>
</dbReference>
<dbReference type="EMBL" id="CH471088">
    <property type="protein sequence ID" value="EAX01210.1"/>
    <property type="molecule type" value="Genomic_DNA"/>
</dbReference>
<dbReference type="EMBL" id="BC096223">
    <property type="protein sequence ID" value="AAH96223.1"/>
    <property type="molecule type" value="mRNA"/>
</dbReference>
<dbReference type="EMBL" id="S79894">
    <property type="protein sequence ID" value="AAB35674.1"/>
    <property type="status" value="ALT_TERM"/>
    <property type="molecule type" value="mRNA"/>
</dbReference>
<dbReference type="CCDS" id="CCDS32807.1">
    <molecule id="Q15532-1"/>
</dbReference>
<dbReference type="CCDS" id="CCDS54183.1">
    <molecule id="Q15532-2"/>
</dbReference>
<dbReference type="PIR" id="S46269">
    <property type="entry name" value="S46269"/>
</dbReference>
<dbReference type="RefSeq" id="NP_001007560.1">
    <molecule id="Q15532-1"/>
    <property type="nucleotide sequence ID" value="NM_001007559.3"/>
</dbReference>
<dbReference type="RefSeq" id="NP_001295130.1">
    <property type="nucleotide sequence ID" value="NM_001308201.1"/>
</dbReference>
<dbReference type="RefSeq" id="NP_005628.2">
    <molecule id="Q15532-2"/>
    <property type="nucleotide sequence ID" value="NM_005637.4"/>
</dbReference>
<dbReference type="PDB" id="7VRB">
    <property type="method" value="X-ray"/>
    <property type="resolution" value="2.39 A"/>
    <property type="chains" value="A/B/C/D=14-101"/>
</dbReference>
<dbReference type="PDBsum" id="7VRB"/>
<dbReference type="SMR" id="Q15532"/>
<dbReference type="BioGRID" id="112638">
    <property type="interactions" value="97"/>
</dbReference>
<dbReference type="ComplexPortal" id="CPX-4084">
    <property type="entry name" value="GBAF (SWI/SNF) ATP-dependent chromatin remodeling complex, ACTL6A-BICRA-SMARCA2 variant"/>
</dbReference>
<dbReference type="ComplexPortal" id="CPX-4203">
    <property type="entry name" value="GBAF (SWI/SNF) ATP-dependent chromatin remodeling complex, ACTL6A-BICRAL-SMARCA2 variant"/>
</dbReference>
<dbReference type="ComplexPortal" id="CPX-4206">
    <property type="entry name" value="GBAF (SWI/SNF) ATP-dependent chromatin remodeling complex, ACTL6A-BICRA-SMARCA4 variant"/>
</dbReference>
<dbReference type="ComplexPortal" id="CPX-4207">
    <property type="entry name" value="GBAF (SWI/SNF) ATP-dependent chromatin remodeling complex, ACTL6A-BICRAL-SMARCA4 variant"/>
</dbReference>
<dbReference type="ComplexPortal" id="CPX-4223">
    <property type="entry name" value="GBAF (SWI/SNF) ATP-dependent chromatin remodeling complex, ACTL6B-BICRA-SMARCA2 variant"/>
</dbReference>
<dbReference type="ComplexPortal" id="CPX-4224">
    <property type="entry name" value="GBAF (SWI/SNF) ATP-dependent chromatin remodeling complex, ACTL6B-BICRAL-SMARCA2 variant"/>
</dbReference>
<dbReference type="ComplexPortal" id="CPX-4225">
    <property type="entry name" value="GBAF (SWI/SNF) ATP-dependent chromatin remodeling complex, ACTL6B-BICRA-SMARCA4 variant"/>
</dbReference>
<dbReference type="ComplexPortal" id="CPX-4226">
    <property type="entry name" value="GBAF (SWI/SNF) ATP-dependent chromatin remodeling complex, ACTL6B-BICRAL-SMARCA4 variant"/>
</dbReference>
<dbReference type="CORUM" id="Q15532"/>
<dbReference type="FunCoup" id="Q15532">
    <property type="interactions" value="2707"/>
</dbReference>
<dbReference type="IntAct" id="Q15532">
    <property type="interactions" value="68"/>
</dbReference>
<dbReference type="MINT" id="Q15532"/>
<dbReference type="STRING" id="9606.ENSP00000414516"/>
<dbReference type="BindingDB" id="Q15532"/>
<dbReference type="GlyGen" id="Q15532">
    <property type="glycosylation" value="1 site, 1 O-linked glycan (1 site)"/>
</dbReference>
<dbReference type="iPTMnet" id="Q15532"/>
<dbReference type="PhosphoSitePlus" id="Q15532"/>
<dbReference type="BioMuta" id="SS18"/>
<dbReference type="jPOST" id="Q15532"/>
<dbReference type="MassIVE" id="Q15532"/>
<dbReference type="PaxDb" id="9606-ENSP00000414516"/>
<dbReference type="PeptideAtlas" id="Q15532"/>
<dbReference type="ProteomicsDB" id="60621">
    <molecule id="Q15532-1"/>
</dbReference>
<dbReference type="ProteomicsDB" id="60622">
    <molecule id="Q15532-2"/>
</dbReference>
<dbReference type="Pumba" id="Q15532"/>
<dbReference type="Antibodypedia" id="22102">
    <property type="antibodies" value="170 antibodies from 30 providers"/>
</dbReference>
<dbReference type="DNASU" id="6760"/>
<dbReference type="Ensembl" id="ENST00000269137.11">
    <molecule id="Q15532-2"/>
    <property type="protein sequence ID" value="ENSP00000269137.7"/>
    <property type="gene ID" value="ENSG00000141380.14"/>
</dbReference>
<dbReference type="Ensembl" id="ENST00000415083.7">
    <molecule id="Q15532-1"/>
    <property type="protein sequence ID" value="ENSP00000414516.2"/>
    <property type="gene ID" value="ENSG00000141380.14"/>
</dbReference>
<dbReference type="GeneID" id="6760"/>
<dbReference type="KEGG" id="hsa:6760"/>
<dbReference type="MANE-Select" id="ENST00000415083.7">
    <property type="protein sequence ID" value="ENSP00000414516.2"/>
    <property type="RefSeq nucleotide sequence ID" value="NM_001007559.3"/>
    <property type="RefSeq protein sequence ID" value="NP_001007560.1"/>
</dbReference>
<dbReference type="UCSC" id="uc002kvm.4">
    <molecule id="Q15532-1"/>
    <property type="organism name" value="human"/>
</dbReference>
<dbReference type="AGR" id="HGNC:11340"/>
<dbReference type="CTD" id="6760"/>
<dbReference type="DisGeNET" id="6760"/>
<dbReference type="GeneCards" id="SS18"/>
<dbReference type="HGNC" id="HGNC:11340">
    <property type="gene designation" value="SS18"/>
</dbReference>
<dbReference type="HPA" id="ENSG00000141380">
    <property type="expression patterns" value="Low tissue specificity"/>
</dbReference>
<dbReference type="MalaCards" id="SS18"/>
<dbReference type="MIM" id="600192">
    <property type="type" value="gene"/>
</dbReference>
<dbReference type="neXtProt" id="NX_Q15532"/>
<dbReference type="OpenTargets" id="ENSG00000141380"/>
<dbReference type="Orphanet" id="3273">
    <property type="disease" value="Synovial sarcoma"/>
</dbReference>
<dbReference type="PharmGKB" id="PA36164"/>
<dbReference type="VEuPathDB" id="HostDB:ENSG00000141380"/>
<dbReference type="eggNOG" id="KOG3227">
    <property type="taxonomic scope" value="Eukaryota"/>
</dbReference>
<dbReference type="GeneTree" id="ENSGT00940000156352"/>
<dbReference type="InParanoid" id="Q15532"/>
<dbReference type="OMA" id="HNGYAYQ"/>
<dbReference type="OrthoDB" id="10265171at2759"/>
<dbReference type="PAN-GO" id="Q15532">
    <property type="GO annotations" value="2 GO annotations based on evolutionary models"/>
</dbReference>
<dbReference type="PhylomeDB" id="Q15532"/>
<dbReference type="TreeFam" id="TF330999"/>
<dbReference type="PathwayCommons" id="Q15532"/>
<dbReference type="Reactome" id="R-HSA-9824585">
    <property type="pathway name" value="Regulation of MITF-M-dependent genes involved in pigmentation"/>
</dbReference>
<dbReference type="Reactome" id="R-HSA-9845323">
    <property type="pathway name" value="Regulation of endogenous retroelements by Piwi-interacting RNAs (piRNAs)"/>
</dbReference>
<dbReference type="SignaLink" id="Q15532"/>
<dbReference type="SIGNOR" id="Q15532"/>
<dbReference type="BioGRID-ORCS" id="6760">
    <property type="hits" value="29 hits in 1177 CRISPR screens"/>
</dbReference>
<dbReference type="ChiTaRS" id="SS18">
    <property type="organism name" value="human"/>
</dbReference>
<dbReference type="GeneWiki" id="SS18"/>
<dbReference type="GenomeRNAi" id="6760"/>
<dbReference type="Pharos" id="Q15532">
    <property type="development level" value="Tbio"/>
</dbReference>
<dbReference type="PRO" id="PR:Q15532"/>
<dbReference type="Proteomes" id="UP000005640">
    <property type="component" value="Chromosome 18"/>
</dbReference>
<dbReference type="RNAct" id="Q15532">
    <property type="molecule type" value="protein"/>
</dbReference>
<dbReference type="Bgee" id="ENSG00000141380">
    <property type="expression patterns" value="Expressed in adrenal tissue and 205 other cell types or tissues"/>
</dbReference>
<dbReference type="ExpressionAtlas" id="Q15532">
    <property type="expression patterns" value="baseline and differential"/>
</dbReference>
<dbReference type="GO" id="GO:0000785">
    <property type="term" value="C:chromatin"/>
    <property type="evidence" value="ECO:0000303"/>
    <property type="project" value="ComplexPortal"/>
</dbReference>
<dbReference type="GO" id="GO:0140288">
    <property type="term" value="C:GBAF complex"/>
    <property type="evidence" value="ECO:0000303"/>
    <property type="project" value="ComplexPortal"/>
</dbReference>
<dbReference type="GO" id="GO:0015630">
    <property type="term" value="C:microtubule cytoskeleton"/>
    <property type="evidence" value="ECO:0007669"/>
    <property type="project" value="Ensembl"/>
</dbReference>
<dbReference type="GO" id="GO:0071564">
    <property type="term" value="C:npBAF complex"/>
    <property type="evidence" value="ECO:0007669"/>
    <property type="project" value="Ensembl"/>
</dbReference>
<dbReference type="GO" id="GO:0005654">
    <property type="term" value="C:nucleoplasm"/>
    <property type="evidence" value="ECO:0000304"/>
    <property type="project" value="Reactome"/>
</dbReference>
<dbReference type="GO" id="GO:0005634">
    <property type="term" value="C:nucleus"/>
    <property type="evidence" value="ECO:0000318"/>
    <property type="project" value="GO_Central"/>
</dbReference>
<dbReference type="GO" id="GO:0016514">
    <property type="term" value="C:SWI/SNF complex"/>
    <property type="evidence" value="ECO:0000314"/>
    <property type="project" value="UniProtKB"/>
</dbReference>
<dbReference type="GO" id="GO:0003713">
    <property type="term" value="F:transcription coactivator activity"/>
    <property type="evidence" value="ECO:0000314"/>
    <property type="project" value="UniProtKB"/>
</dbReference>
<dbReference type="GO" id="GO:0000902">
    <property type="term" value="P:cell morphogenesis"/>
    <property type="evidence" value="ECO:0007669"/>
    <property type="project" value="Ensembl"/>
</dbReference>
<dbReference type="GO" id="GO:0006338">
    <property type="term" value="P:chromatin remodeling"/>
    <property type="evidence" value="ECO:0000303"/>
    <property type="project" value="ComplexPortal"/>
</dbReference>
<dbReference type="GO" id="GO:0048013">
    <property type="term" value="P:ephrin receptor signaling pathway"/>
    <property type="evidence" value="ECO:0007669"/>
    <property type="project" value="Ensembl"/>
</dbReference>
<dbReference type="GO" id="GO:0035556">
    <property type="term" value="P:intracellular signal transduction"/>
    <property type="evidence" value="ECO:0007669"/>
    <property type="project" value="Ensembl"/>
</dbReference>
<dbReference type="GO" id="GO:0000226">
    <property type="term" value="P:microtubule cytoskeleton organization"/>
    <property type="evidence" value="ECO:0007669"/>
    <property type="project" value="Ensembl"/>
</dbReference>
<dbReference type="GO" id="GO:0045596">
    <property type="term" value="P:negative regulation of cell differentiation"/>
    <property type="evidence" value="ECO:0000303"/>
    <property type="project" value="ComplexPortal"/>
</dbReference>
<dbReference type="GO" id="GO:0097150">
    <property type="term" value="P:neuronal stem cell population maintenance"/>
    <property type="evidence" value="ECO:0007669"/>
    <property type="project" value="Ensembl"/>
</dbReference>
<dbReference type="GO" id="GO:0008284">
    <property type="term" value="P:positive regulation of cell population proliferation"/>
    <property type="evidence" value="ECO:0000303"/>
    <property type="project" value="ComplexPortal"/>
</dbReference>
<dbReference type="GO" id="GO:1902459">
    <property type="term" value="P:positive regulation of stem cell population maintenance"/>
    <property type="evidence" value="ECO:0000303"/>
    <property type="project" value="ComplexPortal"/>
</dbReference>
<dbReference type="GO" id="GO:0045944">
    <property type="term" value="P:positive regulation of transcription by RNA polymerase II"/>
    <property type="evidence" value="ECO:0000314"/>
    <property type="project" value="UniProtKB"/>
</dbReference>
<dbReference type="GO" id="GO:0006357">
    <property type="term" value="P:regulation of transcription by RNA polymerase II"/>
    <property type="evidence" value="ECO:0000303"/>
    <property type="project" value="ComplexPortal"/>
</dbReference>
<dbReference type="GO" id="GO:0009410">
    <property type="term" value="P:response to xenobiotic stimulus"/>
    <property type="evidence" value="ECO:0007669"/>
    <property type="project" value="Ensembl"/>
</dbReference>
<dbReference type="InterPro" id="IPR007726">
    <property type="entry name" value="SS18_N"/>
</dbReference>
<dbReference type="PANTHER" id="PTHR23107:SF2">
    <property type="entry name" value="PROTEIN SSXT"/>
    <property type="match status" value="1"/>
</dbReference>
<dbReference type="PANTHER" id="PTHR23107">
    <property type="entry name" value="SYNOVIAL SARCOMA ASSOCIATED SS18 PROTEIN"/>
    <property type="match status" value="1"/>
</dbReference>
<dbReference type="Pfam" id="PF05030">
    <property type="entry name" value="SSXT"/>
    <property type="match status" value="1"/>
</dbReference>
<accession>Q15532</accession>
<accession>B0YJ95</accession>
<accession>Q16404</accession>
<accession>Q4VAX1</accession>
<accession>Q9BXC6</accession>
<comment type="function">
    <text evidence="4 5">Appears to function synergistically with RBM14 as a transcriptional coactivator. Isoform 1 and isoform 2 function in nuclear receptor coactivation. Isoform 1 and isoform 2 function in general transcriptional coactivation. Component of SWI/SNF chromatin remodeling subcomplex GBAF that carries out key enzymatic activities, changing chromatin structure by altering DNA-histone contacts within a nucleosome in an ATP-dependent manner (PubMed:29374058).</text>
</comment>
<comment type="subunit">
    <text evidence="3 4 5">Interacts with MLLT10. Isoform 1 interacts with RBM14 isoform 1. Isoform 2 interacts with RBM14 isoform 1. Component of the multiprotein chromatin-remodeling complexes SWI/SNF: SWI/SNF-A (BAF), SWI/SNF-B (PBAF) and related complexes. The canonical complex contains a catalytic subunit (either SMARCA4/BRG1/BAF190A or SMARCA2/BRM/BAF190B) and at least SMARCE1, ACTL6A/BAF53, SMARCC1/BAF155, SMARCC2/BAF170, and SMARCB1/SNF5/BAF47. Other subunits specific to each of the complexes may also be present permitting several possible combinations developmentally and tissue specific. Component of the SWI/SNF (GBAF) subcomplex, which includes at least BICRA or BICRAL (mutually exclusive), BRD9, SS18, the core BAF subunits, SMARCA2/BRM, SMARCA4/BRG1/BAF190A, ACTL6A/BAF53, SMARCC1/BAF155, and SMARCD1/BAF60A (PubMed:29374058).</text>
</comment>
<comment type="interaction">
    <interactant intactId="EBI-2560599">
        <id>Q15532</id>
    </interactant>
    <interactant intactId="EBI-1170906">
        <id>P15336</id>
        <label>ATF2</label>
    </interactant>
    <organismsDiffer>false</organismsDiffer>
    <experiments>2</experiments>
</comment>
<comment type="subcellular location">
    <subcellularLocation>
        <location evidence="9">Nucleus</location>
    </subcellularLocation>
</comment>
<comment type="alternative products">
    <event type="alternative splicing"/>
    <isoform>
        <id>Q15532-1</id>
        <name>1</name>
        <name>SYTins</name>
        <name>SYT-L</name>
        <sequence type="displayed"/>
    </isoform>
    <isoform>
        <id>Q15532-2</id>
        <name>2</name>
        <sequence type="described" ref="VSP_006258"/>
    </isoform>
</comment>
<comment type="tissue specificity">
    <text>Fairly ubiquitously expressed. Expressed in synovial sarcomas and in other human cell lines. The fusion genes SSXT-SSX1 and SSXT-SSX2 are expressed only in synovial sarcomas.</text>
</comment>
<comment type="disease">
    <text evidence="6 7">A chromosomal aberration involving SS18 may be a cause of synovial sarcoma. Translocation t(X;18)(p11.2;q11.2). The translocation is specifically found in more than 80% of synovial sarcoma. The fusion products SSXT-SSX1 or SSXT-SSX2 are probably responsible for transforming activity. Heterogeneity in the position of the breakpoint can occur (low frequency).</text>
</comment>
<comment type="similarity">
    <text evidence="9">Belongs to the SS18 family.</text>
</comment>
<comment type="sequence caution" evidence="9">
    <conflict type="erroneous initiation">
        <sequence resource="EMBL-CDS" id="AAK21314"/>
    </conflict>
    <text>Extended N-terminus.</text>
</comment>
<comment type="sequence caution" evidence="9">
    <conflict type="erroneous initiation">
        <sequence resource="EMBL-CDS" id="CAA55792"/>
    </conflict>
    <text>Extended N-terminus.</text>
</comment>
<comment type="online information" name="Atlas of Genetics and Cytogenetics in Oncology and Haematology">
    <link uri="https://atlasgeneticsoncology.org/gene/84/SS18"/>
</comment>
<organism>
    <name type="scientific">Homo sapiens</name>
    <name type="common">Human</name>
    <dbReference type="NCBI Taxonomy" id="9606"/>
    <lineage>
        <taxon>Eukaryota</taxon>
        <taxon>Metazoa</taxon>
        <taxon>Chordata</taxon>
        <taxon>Craniata</taxon>
        <taxon>Vertebrata</taxon>
        <taxon>Euteleostomi</taxon>
        <taxon>Mammalia</taxon>
        <taxon>Eutheria</taxon>
        <taxon>Euarchontoglires</taxon>
        <taxon>Primates</taxon>
        <taxon>Haplorrhini</taxon>
        <taxon>Catarrhini</taxon>
        <taxon>Hominidae</taxon>
        <taxon>Homo</taxon>
    </lineage>
</organism>
<protein>
    <recommendedName>
        <fullName>Protein SSXT</fullName>
    </recommendedName>
    <alternativeName>
        <fullName>Protein SYT</fullName>
    </alternativeName>
    <alternativeName>
        <fullName>Synovial sarcoma translocated to X chromosome protein</fullName>
    </alternativeName>
</protein>
<evidence type="ECO:0000255" key="1"/>
<evidence type="ECO:0000256" key="2">
    <source>
        <dbReference type="SAM" id="MobiDB-lite"/>
    </source>
</evidence>
<evidence type="ECO:0000269" key="3">
    <source>
    </source>
</evidence>
<evidence type="ECO:0000269" key="4">
    <source>
    </source>
</evidence>
<evidence type="ECO:0000269" key="5">
    <source>
    </source>
</evidence>
<evidence type="ECO:0000269" key="6">
    <source>
    </source>
</evidence>
<evidence type="ECO:0000269" key="7">
    <source>
    </source>
</evidence>
<evidence type="ECO:0000303" key="8">
    <source>
    </source>
</evidence>
<evidence type="ECO:0000305" key="9"/>
<evidence type="ECO:0007744" key="10">
    <source>
    </source>
</evidence>
<evidence type="ECO:0007829" key="11">
    <source>
        <dbReference type="PDB" id="7VRB"/>
    </source>
</evidence>
<feature type="initiator methionine" description="Removed" evidence="10">
    <location>
        <position position="1"/>
    </location>
</feature>
<feature type="chain" id="PRO_0000181823" description="Protein SSXT">
    <location>
        <begin position="2"/>
        <end position="418"/>
    </location>
</feature>
<feature type="repeat" description="1">
    <location>
        <begin position="344"/>
        <end position="356"/>
    </location>
</feature>
<feature type="repeat" description="2">
    <location>
        <begin position="357"/>
        <end position="369"/>
    </location>
</feature>
<feature type="region of interest" description="Transcriptional activation">
    <location>
        <begin position="2"/>
        <end position="186"/>
    </location>
</feature>
<feature type="region of interest" description="Disordered" evidence="2">
    <location>
        <begin position="77"/>
        <end position="118"/>
    </location>
</feature>
<feature type="region of interest" description="Disordered" evidence="2">
    <location>
        <begin position="188"/>
        <end position="418"/>
    </location>
</feature>
<feature type="region of interest" description="2 X 13 AA imperfect tandem repeats">
    <location>
        <begin position="344"/>
        <end position="369"/>
    </location>
</feature>
<feature type="short sequence motif" description="SH2-binding" evidence="1">
    <location>
        <begin position="50"/>
        <end position="53"/>
    </location>
</feature>
<feature type="short sequence motif" description="SH2-binding" evidence="1">
    <location>
        <begin position="374"/>
        <end position="377"/>
    </location>
</feature>
<feature type="short sequence motif" description="SH3-binding" evidence="1">
    <location>
        <begin position="392"/>
        <end position="401"/>
    </location>
</feature>
<feature type="short sequence motif" description="SH2-binding" evidence="1">
    <location>
        <begin position="413"/>
        <end position="416"/>
    </location>
</feature>
<feature type="compositionally biased region" description="Low complexity" evidence="2">
    <location>
        <begin position="225"/>
        <end position="251"/>
    </location>
</feature>
<feature type="compositionally biased region" description="Basic and acidic residues" evidence="2">
    <location>
        <begin position="309"/>
        <end position="318"/>
    </location>
</feature>
<feature type="compositionally biased region" description="Low complexity" evidence="2">
    <location>
        <begin position="328"/>
        <end position="337"/>
    </location>
</feature>
<feature type="compositionally biased region" description="Low complexity" evidence="2">
    <location>
        <begin position="345"/>
        <end position="366"/>
    </location>
</feature>
<feature type="compositionally biased region" description="Low complexity" evidence="2">
    <location>
        <begin position="376"/>
        <end position="393"/>
    </location>
</feature>
<feature type="compositionally biased region" description="Pro residues" evidence="2">
    <location>
        <begin position="394"/>
        <end position="403"/>
    </location>
</feature>
<feature type="compositionally biased region" description="Low complexity" evidence="2">
    <location>
        <begin position="404"/>
        <end position="418"/>
    </location>
</feature>
<feature type="site" description="Breakpoint for translocation to form the SSXT-SSX1 fusion protein (rare)" evidence="7">
    <location>
        <begin position="366"/>
        <end position="367"/>
    </location>
</feature>
<feature type="site" description="Breakpoint for translocation to form the SSXT-SSX1 or SSXT-SSX2 fusion proteins" evidence="7">
    <location>
        <begin position="410"/>
        <end position="411"/>
    </location>
</feature>
<feature type="modified residue" description="N-acetylserine" evidence="10">
    <location>
        <position position="2"/>
    </location>
</feature>
<feature type="splice variant" id="VSP_006258" description="In isoform 2." evidence="8">
    <location>
        <begin position="295"/>
        <end position="325"/>
    </location>
</feature>
<feature type="helix" evidence="11">
    <location>
        <begin position="18"/>
        <end position="40"/>
    </location>
</feature>
<feature type="helix" evidence="11">
    <location>
        <begin position="44"/>
        <end position="69"/>
    </location>
</feature>
<feature type="helix" evidence="11">
    <location>
        <begin position="72"/>
        <end position="74"/>
    </location>
</feature>
<gene>
    <name type="primary">SS18</name>
    <name type="synonym">SSXT</name>
    <name type="synonym">SYT</name>
</gene>